<name>RL3_XYLFM</name>
<accession>B0U5A7</accession>
<comment type="function">
    <text evidence="1">One of the primary rRNA binding proteins, it binds directly near the 3'-end of the 23S rRNA, where it nucleates assembly of the 50S subunit.</text>
</comment>
<comment type="subunit">
    <text evidence="1">Part of the 50S ribosomal subunit. Forms a cluster with proteins L14 and L19.</text>
</comment>
<comment type="PTM">
    <text evidence="1">Methylated by PrmB.</text>
</comment>
<comment type="similarity">
    <text evidence="1">Belongs to the universal ribosomal protein uL3 family.</text>
</comment>
<dbReference type="EMBL" id="CP000941">
    <property type="protein sequence ID" value="ACA11503.1"/>
    <property type="molecule type" value="Genomic_DNA"/>
</dbReference>
<dbReference type="RefSeq" id="WP_012337684.1">
    <property type="nucleotide sequence ID" value="NC_010513.1"/>
</dbReference>
<dbReference type="SMR" id="B0U5A7"/>
<dbReference type="GeneID" id="93904139"/>
<dbReference type="KEGG" id="xfm:Xfasm12_0494"/>
<dbReference type="HOGENOM" id="CLU_044142_4_1_6"/>
<dbReference type="GO" id="GO:0022625">
    <property type="term" value="C:cytosolic large ribosomal subunit"/>
    <property type="evidence" value="ECO:0007669"/>
    <property type="project" value="TreeGrafter"/>
</dbReference>
<dbReference type="GO" id="GO:0019843">
    <property type="term" value="F:rRNA binding"/>
    <property type="evidence" value="ECO:0007669"/>
    <property type="project" value="UniProtKB-UniRule"/>
</dbReference>
<dbReference type="GO" id="GO:0003735">
    <property type="term" value="F:structural constituent of ribosome"/>
    <property type="evidence" value="ECO:0007669"/>
    <property type="project" value="InterPro"/>
</dbReference>
<dbReference type="GO" id="GO:0006412">
    <property type="term" value="P:translation"/>
    <property type="evidence" value="ECO:0007669"/>
    <property type="project" value="UniProtKB-UniRule"/>
</dbReference>
<dbReference type="FunFam" id="2.40.30.10:FF:000004">
    <property type="entry name" value="50S ribosomal protein L3"/>
    <property type="match status" value="1"/>
</dbReference>
<dbReference type="FunFam" id="3.30.160.810:FF:000001">
    <property type="entry name" value="50S ribosomal protein L3"/>
    <property type="match status" value="1"/>
</dbReference>
<dbReference type="Gene3D" id="3.30.160.810">
    <property type="match status" value="1"/>
</dbReference>
<dbReference type="Gene3D" id="2.40.30.10">
    <property type="entry name" value="Translation factors"/>
    <property type="match status" value="1"/>
</dbReference>
<dbReference type="HAMAP" id="MF_01325_B">
    <property type="entry name" value="Ribosomal_uL3_B"/>
    <property type="match status" value="1"/>
</dbReference>
<dbReference type="InterPro" id="IPR000597">
    <property type="entry name" value="Ribosomal_uL3"/>
</dbReference>
<dbReference type="InterPro" id="IPR019927">
    <property type="entry name" value="Ribosomal_uL3_bac/org-type"/>
</dbReference>
<dbReference type="InterPro" id="IPR019926">
    <property type="entry name" value="Ribosomal_uL3_CS"/>
</dbReference>
<dbReference type="InterPro" id="IPR009000">
    <property type="entry name" value="Transl_B-barrel_sf"/>
</dbReference>
<dbReference type="NCBIfam" id="TIGR03625">
    <property type="entry name" value="L3_bact"/>
    <property type="match status" value="1"/>
</dbReference>
<dbReference type="PANTHER" id="PTHR11229">
    <property type="entry name" value="50S RIBOSOMAL PROTEIN L3"/>
    <property type="match status" value="1"/>
</dbReference>
<dbReference type="PANTHER" id="PTHR11229:SF16">
    <property type="entry name" value="LARGE RIBOSOMAL SUBUNIT PROTEIN UL3C"/>
    <property type="match status" value="1"/>
</dbReference>
<dbReference type="Pfam" id="PF00297">
    <property type="entry name" value="Ribosomal_L3"/>
    <property type="match status" value="1"/>
</dbReference>
<dbReference type="SUPFAM" id="SSF50447">
    <property type="entry name" value="Translation proteins"/>
    <property type="match status" value="1"/>
</dbReference>
<dbReference type="PROSITE" id="PS00474">
    <property type="entry name" value="RIBOSOMAL_L3"/>
    <property type="match status" value="1"/>
</dbReference>
<sequence length="215" mass="23012">MGCYSMGFVGRKAGMSRVFLEDGRSIPVTLIEATANRVVQIKTSDVDGYDAIQVTVGSRRSVLVNKPESGHFAKAKVEAGRGLWEFRVEKTQLGSYSVGSEVGLSIFAVGQKVDIQGITKGKGFQGTIKRHNFRMGDATHGNSLSHRAPGSLGQRQTPGRVFPGKKMSGHMGAVRQSVQNLEVIKIDVERFLIAVRGAIPGASGGDVLIRSASKI</sequence>
<proteinExistence type="inferred from homology"/>
<evidence type="ECO:0000255" key="1">
    <source>
        <dbReference type="HAMAP-Rule" id="MF_01325"/>
    </source>
</evidence>
<evidence type="ECO:0000305" key="2"/>
<protein>
    <recommendedName>
        <fullName evidence="1">Large ribosomal subunit protein uL3</fullName>
    </recommendedName>
    <alternativeName>
        <fullName evidence="2">50S ribosomal protein L3</fullName>
    </alternativeName>
</protein>
<feature type="chain" id="PRO_1000141944" description="Large ribosomal subunit protein uL3">
    <location>
        <begin position="1"/>
        <end position="215"/>
    </location>
</feature>
<feature type="modified residue" description="N5-methylglutamine" evidence="1">
    <location>
        <position position="156"/>
    </location>
</feature>
<gene>
    <name evidence="1" type="primary">rplC</name>
    <name type="ordered locus">Xfasm12_0494</name>
</gene>
<organism>
    <name type="scientific">Xylella fastidiosa (strain M12)</name>
    <dbReference type="NCBI Taxonomy" id="405440"/>
    <lineage>
        <taxon>Bacteria</taxon>
        <taxon>Pseudomonadati</taxon>
        <taxon>Pseudomonadota</taxon>
        <taxon>Gammaproteobacteria</taxon>
        <taxon>Lysobacterales</taxon>
        <taxon>Lysobacteraceae</taxon>
        <taxon>Xylella</taxon>
    </lineage>
</organism>
<reference key="1">
    <citation type="journal article" date="2010" name="J. Bacteriol.">
        <title>Whole genome sequences of two Xylella fastidiosa strains (M12 and M23) causing almond leaf scorch disease in California.</title>
        <authorList>
            <person name="Chen J."/>
            <person name="Xie G."/>
            <person name="Han S."/>
            <person name="Chertkov O."/>
            <person name="Sims D."/>
            <person name="Civerolo E.L."/>
        </authorList>
    </citation>
    <scope>NUCLEOTIDE SEQUENCE [LARGE SCALE GENOMIC DNA]</scope>
    <source>
        <strain>M12</strain>
    </source>
</reference>
<keyword id="KW-0488">Methylation</keyword>
<keyword id="KW-0687">Ribonucleoprotein</keyword>
<keyword id="KW-0689">Ribosomal protein</keyword>
<keyword id="KW-0694">RNA-binding</keyword>
<keyword id="KW-0699">rRNA-binding</keyword>